<accession>Q88D28</accession>
<name>HSLV_PSEPK</name>
<proteinExistence type="inferred from homology"/>
<sequence>MTTIVSVRRNGKVVMGGDGQVSLGNTVMKGNAKKVRRLYHGQVIAGFAGATADAFTLFERFEGQLEKHQGHLVRAAVELAKEWRTDRSLSRLEAMLAVANKDASLIITGNGDVVEPEDGLIAMGSGGAYAQAAARALLNKTDLSAREIAETALNIAGDICVFTNHNLTIEEQDLAD</sequence>
<gene>
    <name evidence="2" type="primary">hslV</name>
    <name type="ordered locus">PP_5000</name>
</gene>
<reference key="1">
    <citation type="journal article" date="2002" name="Environ. Microbiol.">
        <title>Complete genome sequence and comparative analysis of the metabolically versatile Pseudomonas putida KT2440.</title>
        <authorList>
            <person name="Nelson K.E."/>
            <person name="Weinel C."/>
            <person name="Paulsen I.T."/>
            <person name="Dodson R.J."/>
            <person name="Hilbert H."/>
            <person name="Martins dos Santos V.A.P."/>
            <person name="Fouts D.E."/>
            <person name="Gill S.R."/>
            <person name="Pop M."/>
            <person name="Holmes M."/>
            <person name="Brinkac L.M."/>
            <person name="Beanan M.J."/>
            <person name="DeBoy R.T."/>
            <person name="Daugherty S.C."/>
            <person name="Kolonay J.F."/>
            <person name="Madupu R."/>
            <person name="Nelson W.C."/>
            <person name="White O."/>
            <person name="Peterson J.D."/>
            <person name="Khouri H.M."/>
            <person name="Hance I."/>
            <person name="Chris Lee P."/>
            <person name="Holtzapple E.K."/>
            <person name="Scanlan D."/>
            <person name="Tran K."/>
            <person name="Moazzez A."/>
            <person name="Utterback T.R."/>
            <person name="Rizzo M."/>
            <person name="Lee K."/>
            <person name="Kosack D."/>
            <person name="Moestl D."/>
            <person name="Wedler H."/>
            <person name="Lauber J."/>
            <person name="Stjepandic D."/>
            <person name="Hoheisel J."/>
            <person name="Straetz M."/>
            <person name="Heim S."/>
            <person name="Kiewitz C."/>
            <person name="Eisen J.A."/>
            <person name="Timmis K.N."/>
            <person name="Duesterhoeft A."/>
            <person name="Tuemmler B."/>
            <person name="Fraser C.M."/>
        </authorList>
    </citation>
    <scope>NUCLEOTIDE SEQUENCE [LARGE SCALE GENOMIC DNA]</scope>
    <source>
        <strain>ATCC 47054 / DSM 6125 / CFBP 8728 / NCIMB 11950 / KT2440</strain>
    </source>
</reference>
<keyword id="KW-0021">Allosteric enzyme</keyword>
<keyword id="KW-0963">Cytoplasm</keyword>
<keyword id="KW-0378">Hydrolase</keyword>
<keyword id="KW-0479">Metal-binding</keyword>
<keyword id="KW-0645">Protease</keyword>
<keyword id="KW-1185">Reference proteome</keyword>
<keyword id="KW-0915">Sodium</keyword>
<keyword id="KW-0888">Threonine protease</keyword>
<dbReference type="EC" id="3.4.25.2" evidence="2"/>
<dbReference type="EMBL" id="AE015451">
    <property type="protein sequence ID" value="AAN70566.1"/>
    <property type="molecule type" value="Genomic_DNA"/>
</dbReference>
<dbReference type="RefSeq" id="NP_747102.1">
    <property type="nucleotide sequence ID" value="NC_002947.4"/>
</dbReference>
<dbReference type="RefSeq" id="WP_003249309.1">
    <property type="nucleotide sequence ID" value="NZ_CP169744.1"/>
</dbReference>
<dbReference type="SMR" id="Q88D28"/>
<dbReference type="STRING" id="160488.PP_5000"/>
<dbReference type="MEROPS" id="T01.007"/>
<dbReference type="PaxDb" id="160488-PP_5000"/>
<dbReference type="GeneID" id="97170363"/>
<dbReference type="KEGG" id="ppu:PP_5000"/>
<dbReference type="PATRIC" id="fig|160488.4.peg.5341"/>
<dbReference type="eggNOG" id="COG5405">
    <property type="taxonomic scope" value="Bacteria"/>
</dbReference>
<dbReference type="HOGENOM" id="CLU_093872_1_0_6"/>
<dbReference type="OrthoDB" id="9804884at2"/>
<dbReference type="PhylomeDB" id="Q88D28"/>
<dbReference type="BioCyc" id="PPUT160488:G1G01-5345-MONOMER"/>
<dbReference type="Proteomes" id="UP000000556">
    <property type="component" value="Chromosome"/>
</dbReference>
<dbReference type="GO" id="GO:0009376">
    <property type="term" value="C:HslUV protease complex"/>
    <property type="evidence" value="ECO:0007669"/>
    <property type="project" value="UniProtKB-UniRule"/>
</dbReference>
<dbReference type="GO" id="GO:0005839">
    <property type="term" value="C:proteasome core complex"/>
    <property type="evidence" value="ECO:0007669"/>
    <property type="project" value="InterPro"/>
</dbReference>
<dbReference type="GO" id="GO:0046872">
    <property type="term" value="F:metal ion binding"/>
    <property type="evidence" value="ECO:0007669"/>
    <property type="project" value="UniProtKB-KW"/>
</dbReference>
<dbReference type="GO" id="GO:0004298">
    <property type="term" value="F:threonine-type endopeptidase activity"/>
    <property type="evidence" value="ECO:0007669"/>
    <property type="project" value="UniProtKB-KW"/>
</dbReference>
<dbReference type="GO" id="GO:0051603">
    <property type="term" value="P:proteolysis involved in protein catabolic process"/>
    <property type="evidence" value="ECO:0007669"/>
    <property type="project" value="InterPro"/>
</dbReference>
<dbReference type="CDD" id="cd01913">
    <property type="entry name" value="protease_HslV"/>
    <property type="match status" value="1"/>
</dbReference>
<dbReference type="FunFam" id="3.60.20.10:FF:000002">
    <property type="entry name" value="ATP-dependent protease subunit HslV"/>
    <property type="match status" value="1"/>
</dbReference>
<dbReference type="Gene3D" id="3.60.20.10">
    <property type="entry name" value="Glutamine Phosphoribosylpyrophosphate, subunit 1, domain 1"/>
    <property type="match status" value="1"/>
</dbReference>
<dbReference type="HAMAP" id="MF_00248">
    <property type="entry name" value="HslV"/>
    <property type="match status" value="1"/>
</dbReference>
<dbReference type="InterPro" id="IPR022281">
    <property type="entry name" value="ATP-dep_Prtase_HsIV_su"/>
</dbReference>
<dbReference type="InterPro" id="IPR029055">
    <property type="entry name" value="Ntn_hydrolases_N"/>
</dbReference>
<dbReference type="InterPro" id="IPR001353">
    <property type="entry name" value="Proteasome_sua/b"/>
</dbReference>
<dbReference type="InterPro" id="IPR023333">
    <property type="entry name" value="Proteasome_suB-type"/>
</dbReference>
<dbReference type="NCBIfam" id="TIGR03692">
    <property type="entry name" value="ATP_dep_HslV"/>
    <property type="match status" value="1"/>
</dbReference>
<dbReference type="NCBIfam" id="NF003964">
    <property type="entry name" value="PRK05456.1"/>
    <property type="match status" value="1"/>
</dbReference>
<dbReference type="PANTHER" id="PTHR32194:SF0">
    <property type="entry name" value="ATP-DEPENDENT PROTEASE SUBUNIT HSLV"/>
    <property type="match status" value="1"/>
</dbReference>
<dbReference type="PANTHER" id="PTHR32194">
    <property type="entry name" value="METALLOPROTEASE TLDD"/>
    <property type="match status" value="1"/>
</dbReference>
<dbReference type="Pfam" id="PF00227">
    <property type="entry name" value="Proteasome"/>
    <property type="match status" value="1"/>
</dbReference>
<dbReference type="PIRSF" id="PIRSF039093">
    <property type="entry name" value="HslV"/>
    <property type="match status" value="1"/>
</dbReference>
<dbReference type="SUPFAM" id="SSF56235">
    <property type="entry name" value="N-terminal nucleophile aminohydrolases (Ntn hydrolases)"/>
    <property type="match status" value="1"/>
</dbReference>
<dbReference type="PROSITE" id="PS51476">
    <property type="entry name" value="PROTEASOME_BETA_2"/>
    <property type="match status" value="1"/>
</dbReference>
<organism>
    <name type="scientific">Pseudomonas putida (strain ATCC 47054 / DSM 6125 / CFBP 8728 / NCIMB 11950 / KT2440)</name>
    <dbReference type="NCBI Taxonomy" id="160488"/>
    <lineage>
        <taxon>Bacteria</taxon>
        <taxon>Pseudomonadati</taxon>
        <taxon>Pseudomonadota</taxon>
        <taxon>Gammaproteobacteria</taxon>
        <taxon>Pseudomonadales</taxon>
        <taxon>Pseudomonadaceae</taxon>
        <taxon>Pseudomonas</taxon>
    </lineage>
</organism>
<evidence type="ECO:0000250" key="1"/>
<evidence type="ECO:0000255" key="2">
    <source>
        <dbReference type="HAMAP-Rule" id="MF_00248"/>
    </source>
</evidence>
<feature type="initiator methionine" description="Removed" evidence="1">
    <location>
        <position position="1"/>
    </location>
</feature>
<feature type="chain" id="PRO_0000148133" description="ATP-dependent protease subunit HslV">
    <location>
        <begin position="2"/>
        <end position="176"/>
    </location>
</feature>
<feature type="active site" evidence="2">
    <location>
        <position position="2"/>
    </location>
</feature>
<feature type="binding site" evidence="2">
    <location>
        <position position="157"/>
    </location>
    <ligand>
        <name>Na(+)</name>
        <dbReference type="ChEBI" id="CHEBI:29101"/>
    </ligand>
</feature>
<feature type="binding site" evidence="2">
    <location>
        <position position="160"/>
    </location>
    <ligand>
        <name>Na(+)</name>
        <dbReference type="ChEBI" id="CHEBI:29101"/>
    </ligand>
</feature>
<feature type="binding site" evidence="2">
    <location>
        <position position="163"/>
    </location>
    <ligand>
        <name>Na(+)</name>
        <dbReference type="ChEBI" id="CHEBI:29101"/>
    </ligand>
</feature>
<comment type="function">
    <text evidence="2">Protease subunit of a proteasome-like degradation complex believed to be a general protein degrading machinery.</text>
</comment>
<comment type="catalytic activity">
    <reaction evidence="2">
        <text>ATP-dependent cleavage of peptide bonds with broad specificity.</text>
        <dbReference type="EC" id="3.4.25.2"/>
    </reaction>
</comment>
<comment type="activity regulation">
    <text evidence="2">Allosterically activated by HslU binding.</text>
</comment>
<comment type="subunit">
    <text evidence="2">A double ring-shaped homohexamer of HslV is capped on each side by a ring-shaped HslU homohexamer. The assembly of the HslU/HslV complex is dependent on binding of ATP.</text>
</comment>
<comment type="subcellular location">
    <subcellularLocation>
        <location evidence="2">Cytoplasm</location>
    </subcellularLocation>
</comment>
<comment type="similarity">
    <text evidence="2">Belongs to the peptidase T1B family. HslV subfamily.</text>
</comment>
<protein>
    <recommendedName>
        <fullName evidence="2">ATP-dependent protease subunit HslV</fullName>
        <ecNumber evidence="2">3.4.25.2</ecNumber>
    </recommendedName>
</protein>